<organism>
    <name type="scientific">Symbiobacterium thermophilum (strain DSM 24528 / JCM 14929 / IAM 14863 / T)</name>
    <dbReference type="NCBI Taxonomy" id="292459"/>
    <lineage>
        <taxon>Bacteria</taxon>
        <taxon>Bacillati</taxon>
        <taxon>Bacillota</taxon>
        <taxon>Clostridia</taxon>
        <taxon>Eubacteriales</taxon>
        <taxon>Symbiobacteriaceae</taxon>
        <taxon>Symbiobacterium</taxon>
    </lineage>
</organism>
<dbReference type="EC" id="6.3.5.3" evidence="1"/>
<dbReference type="EMBL" id="AP006840">
    <property type="protein sequence ID" value="BAD41840.1"/>
    <property type="molecule type" value="Genomic_DNA"/>
</dbReference>
<dbReference type="SMR" id="Q67KF8"/>
<dbReference type="STRING" id="292459.STH2855"/>
<dbReference type="KEGG" id="sth:STH2855"/>
<dbReference type="eggNOG" id="COG0046">
    <property type="taxonomic scope" value="Bacteria"/>
</dbReference>
<dbReference type="HOGENOM" id="CLU_003100_0_1_9"/>
<dbReference type="OrthoDB" id="9804441at2"/>
<dbReference type="UniPathway" id="UPA00074">
    <property type="reaction ID" value="UER00128"/>
</dbReference>
<dbReference type="Proteomes" id="UP000000417">
    <property type="component" value="Chromosome"/>
</dbReference>
<dbReference type="GO" id="GO:0005737">
    <property type="term" value="C:cytoplasm"/>
    <property type="evidence" value="ECO:0007669"/>
    <property type="project" value="UniProtKB-SubCell"/>
</dbReference>
<dbReference type="GO" id="GO:0005524">
    <property type="term" value="F:ATP binding"/>
    <property type="evidence" value="ECO:0007669"/>
    <property type="project" value="UniProtKB-UniRule"/>
</dbReference>
<dbReference type="GO" id="GO:0000287">
    <property type="term" value="F:magnesium ion binding"/>
    <property type="evidence" value="ECO:0007669"/>
    <property type="project" value="UniProtKB-UniRule"/>
</dbReference>
<dbReference type="GO" id="GO:0004642">
    <property type="term" value="F:phosphoribosylformylglycinamidine synthase activity"/>
    <property type="evidence" value="ECO:0007669"/>
    <property type="project" value="UniProtKB-UniRule"/>
</dbReference>
<dbReference type="GO" id="GO:0006189">
    <property type="term" value="P:'de novo' IMP biosynthetic process"/>
    <property type="evidence" value="ECO:0007669"/>
    <property type="project" value="UniProtKB-UniRule"/>
</dbReference>
<dbReference type="CDD" id="cd02203">
    <property type="entry name" value="PurL_repeat1"/>
    <property type="match status" value="1"/>
</dbReference>
<dbReference type="CDD" id="cd02204">
    <property type="entry name" value="PurL_repeat2"/>
    <property type="match status" value="1"/>
</dbReference>
<dbReference type="FunFam" id="3.30.1330.10:FF:000004">
    <property type="entry name" value="Phosphoribosylformylglycinamidine synthase subunit PurL"/>
    <property type="match status" value="1"/>
</dbReference>
<dbReference type="Gene3D" id="3.90.650.10">
    <property type="entry name" value="PurM-like C-terminal domain"/>
    <property type="match status" value="2"/>
</dbReference>
<dbReference type="Gene3D" id="3.30.1330.10">
    <property type="entry name" value="PurM-like, N-terminal domain"/>
    <property type="match status" value="2"/>
</dbReference>
<dbReference type="HAMAP" id="MF_00420">
    <property type="entry name" value="PurL_2"/>
    <property type="match status" value="1"/>
</dbReference>
<dbReference type="InterPro" id="IPR010074">
    <property type="entry name" value="PRibForGlyAmidine_synth_PurL"/>
</dbReference>
<dbReference type="InterPro" id="IPR041609">
    <property type="entry name" value="PurL_linker"/>
</dbReference>
<dbReference type="InterPro" id="IPR010918">
    <property type="entry name" value="PurM-like_C_dom"/>
</dbReference>
<dbReference type="InterPro" id="IPR036676">
    <property type="entry name" value="PurM-like_C_sf"/>
</dbReference>
<dbReference type="InterPro" id="IPR016188">
    <property type="entry name" value="PurM-like_N"/>
</dbReference>
<dbReference type="InterPro" id="IPR036921">
    <property type="entry name" value="PurM-like_N_sf"/>
</dbReference>
<dbReference type="NCBIfam" id="TIGR01736">
    <property type="entry name" value="FGAM_synth_II"/>
    <property type="match status" value="1"/>
</dbReference>
<dbReference type="NCBIfam" id="NF002290">
    <property type="entry name" value="PRK01213.1"/>
    <property type="match status" value="1"/>
</dbReference>
<dbReference type="PANTHER" id="PTHR43555">
    <property type="entry name" value="PHOSPHORIBOSYLFORMYLGLYCINAMIDINE SYNTHASE SUBUNIT PURL"/>
    <property type="match status" value="1"/>
</dbReference>
<dbReference type="PANTHER" id="PTHR43555:SF1">
    <property type="entry name" value="PHOSPHORIBOSYLFORMYLGLYCINAMIDINE SYNTHASE SUBUNIT PURL"/>
    <property type="match status" value="1"/>
</dbReference>
<dbReference type="Pfam" id="PF00586">
    <property type="entry name" value="AIRS"/>
    <property type="match status" value="2"/>
</dbReference>
<dbReference type="Pfam" id="PF02769">
    <property type="entry name" value="AIRS_C"/>
    <property type="match status" value="2"/>
</dbReference>
<dbReference type="Pfam" id="PF18072">
    <property type="entry name" value="FGAR-AT_linker"/>
    <property type="match status" value="1"/>
</dbReference>
<dbReference type="PIRSF" id="PIRSF001587">
    <property type="entry name" value="FGAM_synthase_II"/>
    <property type="match status" value="1"/>
</dbReference>
<dbReference type="SUPFAM" id="SSF56042">
    <property type="entry name" value="PurM C-terminal domain-like"/>
    <property type="match status" value="2"/>
</dbReference>
<dbReference type="SUPFAM" id="SSF55326">
    <property type="entry name" value="PurM N-terminal domain-like"/>
    <property type="match status" value="2"/>
</dbReference>
<sequence length="778" mass="82896">MSEMQQPWSLVGLTEAEYRRVVEILGREPNPTELHMFGVMWSEHCAYKHSKAALRRLPTRGEHVLQGPGENAGVVRIDDDLAVAFKLESHNHPSFVDPFNGAATGVGGILRDVFTMGARPVATLNSLRFGPLDEPKQRELLRGVVAGIGHYGNTVGVPCIGGEVYFDESYRGNCLVNAMCIGILRPDRIHRGIAAGPGNAIMVVGNPTGRDGIHAASLLASAEFSGSEAEAALPTVPVGDPFAEKMLMEACLELFETDAVVGIQDMGAAGLISSSSEMAARGGVGVELDVRKVPAREEGMEPWEFLLSESQERMLVCVKKGREAEVEAICRKWGVGCAVIGRVTDDGMVRVLDDGRVVAEVPARALAEAPVYHPAKAEPAYLAELRAFDWSRLPEPEDWNETLLRLLGSPNIGARAWIYEQFDHMVQAGTVLGPGGDAGVIRLGAAVAPGAHGLTRQPPGEGLPGRSGQAGPPKGIAASVDCNGRYVYLNPRRGTAIAVAEAARNCVVTGARPVAITNNCNFGNPEKPEIFWTFDEAITGMAEACEALGTPVTGGNVSFYNETSGEAIHPTPTIGMIAVHENLDRLTTPGFKQVGDVILLLGETRDELGGSEYARLIHGVLAGDAPALDLAFEKRLQDVVLRAIHEGLVTAAHDVAEGGLAVALAEMAIAAAEPSLGCQVSIFLGEGRVDGQLFGESQSRILVTATREQVGRLQALLMVEQIPFRVLGDVTADGRFRLAALAPGSGSAHVYRRQELIDLPVADLVRAHKEAIPRWMDA</sequence>
<proteinExistence type="inferred from homology"/>
<comment type="function">
    <text evidence="1">Part of the phosphoribosylformylglycinamidine synthase complex involved in the purines biosynthetic pathway. Catalyzes the ATP-dependent conversion of formylglycinamide ribonucleotide (FGAR) and glutamine to yield formylglycinamidine ribonucleotide (FGAM) and glutamate. The FGAM synthase complex is composed of three subunits. PurQ produces an ammonia molecule by converting glutamine to glutamate. PurL transfers the ammonia molecule to FGAR to form FGAM in an ATP-dependent manner. PurS interacts with PurQ and PurL and is thought to assist in the transfer of the ammonia molecule from PurQ to PurL.</text>
</comment>
<comment type="catalytic activity">
    <reaction evidence="1">
        <text>N(2)-formyl-N(1)-(5-phospho-beta-D-ribosyl)glycinamide + L-glutamine + ATP + H2O = 2-formamido-N(1)-(5-O-phospho-beta-D-ribosyl)acetamidine + L-glutamate + ADP + phosphate + H(+)</text>
        <dbReference type="Rhea" id="RHEA:17129"/>
        <dbReference type="ChEBI" id="CHEBI:15377"/>
        <dbReference type="ChEBI" id="CHEBI:15378"/>
        <dbReference type="ChEBI" id="CHEBI:29985"/>
        <dbReference type="ChEBI" id="CHEBI:30616"/>
        <dbReference type="ChEBI" id="CHEBI:43474"/>
        <dbReference type="ChEBI" id="CHEBI:58359"/>
        <dbReference type="ChEBI" id="CHEBI:147286"/>
        <dbReference type="ChEBI" id="CHEBI:147287"/>
        <dbReference type="ChEBI" id="CHEBI:456216"/>
        <dbReference type="EC" id="6.3.5.3"/>
    </reaction>
</comment>
<comment type="pathway">
    <text evidence="1">Purine metabolism; IMP biosynthesis via de novo pathway; 5-amino-1-(5-phospho-D-ribosyl)imidazole from N(2)-formyl-N(1)-(5-phospho-D-ribosyl)glycinamide: step 1/2.</text>
</comment>
<comment type="subunit">
    <text evidence="1">Monomer. Part of the FGAM synthase complex composed of 1 PurL, 1 PurQ and 2 PurS subunits.</text>
</comment>
<comment type="subcellular location">
    <subcellularLocation>
        <location evidence="1">Cytoplasm</location>
    </subcellularLocation>
</comment>
<comment type="similarity">
    <text evidence="1">Belongs to the FGAMS family.</text>
</comment>
<keyword id="KW-0067">ATP-binding</keyword>
<keyword id="KW-0963">Cytoplasm</keyword>
<keyword id="KW-0436">Ligase</keyword>
<keyword id="KW-0460">Magnesium</keyword>
<keyword id="KW-0479">Metal-binding</keyword>
<keyword id="KW-0547">Nucleotide-binding</keyword>
<keyword id="KW-0658">Purine biosynthesis</keyword>
<keyword id="KW-1185">Reference proteome</keyword>
<reference key="1">
    <citation type="journal article" date="2004" name="Nucleic Acids Res.">
        <title>Genome sequence of Symbiobacterium thermophilum, an uncultivable bacterium that depends on microbial commensalism.</title>
        <authorList>
            <person name="Ueda K."/>
            <person name="Yamashita A."/>
            <person name="Ishikawa J."/>
            <person name="Shimada M."/>
            <person name="Watsuji T."/>
            <person name="Morimura K."/>
            <person name="Ikeda H."/>
            <person name="Hattori M."/>
            <person name="Beppu T."/>
        </authorList>
    </citation>
    <scope>NUCLEOTIDE SEQUENCE [LARGE SCALE GENOMIC DNA]</scope>
    <source>
        <strain>DSM 24528 / JCM 14929 / IAM 14863 / T</strain>
    </source>
</reference>
<gene>
    <name evidence="1" type="primary">purL</name>
    <name type="ordered locus">STH2855</name>
</gene>
<accession>Q67KF8</accession>
<evidence type="ECO:0000255" key="1">
    <source>
        <dbReference type="HAMAP-Rule" id="MF_00420"/>
    </source>
</evidence>
<evidence type="ECO:0000256" key="2">
    <source>
        <dbReference type="SAM" id="MobiDB-lite"/>
    </source>
</evidence>
<feature type="chain" id="PRO_0000100495" description="Phosphoribosylformylglycinamidine synthase subunit PurL">
    <location>
        <begin position="1"/>
        <end position="778"/>
    </location>
</feature>
<feature type="region of interest" description="Disordered" evidence="2">
    <location>
        <begin position="455"/>
        <end position="474"/>
    </location>
</feature>
<feature type="active site" evidence="1">
    <location>
        <position position="44"/>
    </location>
</feature>
<feature type="active site" description="Proton acceptor" evidence="1">
    <location>
        <position position="90"/>
    </location>
</feature>
<feature type="binding site" evidence="1">
    <location>
        <position position="47"/>
    </location>
    <ligand>
        <name>ATP</name>
        <dbReference type="ChEBI" id="CHEBI:30616"/>
    </ligand>
</feature>
<feature type="binding site" evidence="1">
    <location>
        <position position="86"/>
    </location>
    <ligand>
        <name>ATP</name>
        <dbReference type="ChEBI" id="CHEBI:30616"/>
    </ligand>
</feature>
<feature type="binding site" evidence="1">
    <location>
        <position position="88"/>
    </location>
    <ligand>
        <name>Mg(2+)</name>
        <dbReference type="ChEBI" id="CHEBI:18420"/>
        <label>1</label>
    </ligand>
</feature>
<feature type="binding site" evidence="1">
    <location>
        <begin position="89"/>
        <end position="92"/>
    </location>
    <ligand>
        <name>substrate</name>
    </ligand>
</feature>
<feature type="binding site" evidence="1">
    <location>
        <position position="111"/>
    </location>
    <ligand>
        <name>substrate</name>
    </ligand>
</feature>
<feature type="binding site" evidence="1">
    <location>
        <position position="112"/>
    </location>
    <ligand>
        <name>Mg(2+)</name>
        <dbReference type="ChEBI" id="CHEBI:18420"/>
        <label>2</label>
    </ligand>
</feature>
<feature type="binding site" evidence="1">
    <location>
        <position position="265"/>
    </location>
    <ligand>
        <name>Mg(2+)</name>
        <dbReference type="ChEBI" id="CHEBI:18420"/>
        <label>2</label>
    </ligand>
</feature>
<feature type="binding site" evidence="1">
    <location>
        <begin position="309"/>
        <end position="311"/>
    </location>
    <ligand>
        <name>substrate</name>
    </ligand>
</feature>
<feature type="binding site" evidence="1">
    <location>
        <position position="518"/>
    </location>
    <ligand>
        <name>ATP</name>
        <dbReference type="ChEBI" id="CHEBI:30616"/>
    </ligand>
</feature>
<feature type="binding site" evidence="1">
    <location>
        <position position="555"/>
    </location>
    <ligand>
        <name>ATP</name>
        <dbReference type="ChEBI" id="CHEBI:30616"/>
    </ligand>
</feature>
<feature type="binding site" evidence="1">
    <location>
        <position position="556"/>
    </location>
    <ligand>
        <name>Mg(2+)</name>
        <dbReference type="ChEBI" id="CHEBI:18420"/>
        <label>1</label>
    </ligand>
</feature>
<feature type="binding site" evidence="1">
    <location>
        <position position="558"/>
    </location>
    <ligand>
        <name>substrate</name>
    </ligand>
</feature>
<name>PURL_SYMTH</name>
<protein>
    <recommendedName>
        <fullName evidence="1">Phosphoribosylformylglycinamidine synthase subunit PurL</fullName>
        <shortName evidence="1">FGAM synthase</shortName>
        <ecNumber evidence="1">6.3.5.3</ecNumber>
    </recommendedName>
    <alternativeName>
        <fullName evidence="1">Formylglycinamide ribonucleotide amidotransferase subunit II</fullName>
        <shortName evidence="1">FGAR amidotransferase II</shortName>
        <shortName evidence="1">FGAR-AT II</shortName>
    </alternativeName>
    <alternativeName>
        <fullName evidence="1">Glutamine amidotransferase PurL</fullName>
    </alternativeName>
    <alternativeName>
        <fullName evidence="1">Phosphoribosylformylglycinamidine synthase subunit II</fullName>
    </alternativeName>
</protein>